<comment type="sequence caution" evidence="2">
    <conflict type="erroneous initiation">
        <sequence resource="EMBL-CDS" id="AAH98623"/>
    </conflict>
</comment>
<organism>
    <name type="scientific">Danio rerio</name>
    <name type="common">Zebrafish</name>
    <name type="synonym">Brachydanio rerio</name>
    <dbReference type="NCBI Taxonomy" id="7955"/>
    <lineage>
        <taxon>Eukaryota</taxon>
        <taxon>Metazoa</taxon>
        <taxon>Chordata</taxon>
        <taxon>Craniata</taxon>
        <taxon>Vertebrata</taxon>
        <taxon>Euteleostomi</taxon>
        <taxon>Actinopterygii</taxon>
        <taxon>Neopterygii</taxon>
        <taxon>Teleostei</taxon>
        <taxon>Ostariophysi</taxon>
        <taxon>Cypriniformes</taxon>
        <taxon>Danionidae</taxon>
        <taxon>Danioninae</taxon>
        <taxon>Danio</taxon>
    </lineage>
</organism>
<sequence>MAAAAMAGAADPPHLTEAKKLEYFSSINSMARKIMQEREKIKETYGSAWSQMSPVEQDTAIDNGMMDPRIRARYAMHRVDRDEVICYPKLLIQTGQKIVHFGEEDLTWQDEHSAPFSWETKSQMDFSISNMTELFVPPSVNEPKPKTSQTTKPPSNDESSFWKISAERSRLDNEKAEFPSLTPSQIKSLEKGEKPLPSYLRLESGSRDMEEVPVSRPAKQRAPKPPAPPPPPPVPISMTPAAISVTPTPPAPVPSLEEGWERAQSTLPSVSSTTDEVFSPGLVTRSSSQSNSTVKDVEKAEASPASSPTFSQFNTSSSILKTGFDFLDNW</sequence>
<gene>
    <name type="ORF">wu:fa18f11</name>
</gene>
<accession>Q4KMC9</accession>
<feature type="chain" id="PRO_0000359745" description="Uncharacterized protein C1orf198 homolog">
    <location>
        <begin position="1"/>
        <end position="330"/>
    </location>
</feature>
<feature type="region of interest" description="Disordered" evidence="1">
    <location>
        <begin position="136"/>
        <end position="160"/>
    </location>
</feature>
<feature type="region of interest" description="Disordered" evidence="1">
    <location>
        <begin position="172"/>
        <end position="314"/>
    </location>
</feature>
<feature type="compositionally biased region" description="Pro residues" evidence="1">
    <location>
        <begin position="223"/>
        <end position="235"/>
    </location>
</feature>
<feature type="compositionally biased region" description="Low complexity" evidence="1">
    <location>
        <begin position="236"/>
        <end position="246"/>
    </location>
</feature>
<feature type="compositionally biased region" description="Polar residues" evidence="1">
    <location>
        <begin position="263"/>
        <end position="276"/>
    </location>
</feature>
<feature type="compositionally biased region" description="Polar residues" evidence="1">
    <location>
        <begin position="284"/>
        <end position="294"/>
    </location>
</feature>
<feature type="compositionally biased region" description="Polar residues" evidence="1">
    <location>
        <begin position="304"/>
        <end position="314"/>
    </location>
</feature>
<keyword id="KW-1185">Reference proteome</keyword>
<evidence type="ECO:0000256" key="1">
    <source>
        <dbReference type="SAM" id="MobiDB-lite"/>
    </source>
</evidence>
<evidence type="ECO:0000305" key="2"/>
<protein>
    <recommendedName>
        <fullName>Uncharacterized protein C1orf198 homolog</fullName>
    </recommendedName>
</protein>
<dbReference type="EMBL" id="BC098623">
    <property type="protein sequence ID" value="AAH98623.1"/>
    <property type="status" value="ALT_INIT"/>
    <property type="molecule type" value="mRNA"/>
</dbReference>
<dbReference type="FunCoup" id="Q4KMC9">
    <property type="interactions" value="1193"/>
</dbReference>
<dbReference type="STRING" id="7955.ENSDARP00000064364"/>
<dbReference type="PaxDb" id="7955-ENSDARP00000064364"/>
<dbReference type="AGR" id="ZFIN:ZDB-GENE-030131-5221"/>
<dbReference type="ZFIN" id="ZDB-GENE-030131-5221">
    <property type="gene designation" value="si:ch73-111k22.2"/>
</dbReference>
<dbReference type="eggNOG" id="ENOG502R926">
    <property type="taxonomic scope" value="Eukaryota"/>
</dbReference>
<dbReference type="InParanoid" id="Q4KMC9"/>
<dbReference type="PhylomeDB" id="Q4KMC9"/>
<dbReference type="PRO" id="PR:Q4KMC9"/>
<dbReference type="Proteomes" id="UP000000437">
    <property type="component" value="Unplaced"/>
</dbReference>
<dbReference type="InterPro" id="IPR031600">
    <property type="entry name" value="DUF4706"/>
</dbReference>
<dbReference type="PANTHER" id="PTHR34394">
    <property type="entry name" value="SIMILAR TO RIKEN CDNA 2310022B05"/>
    <property type="match status" value="1"/>
</dbReference>
<dbReference type="PANTHER" id="PTHR34394:SF1">
    <property type="entry name" value="SIMILAR TO RIKEN CDNA 2310022B05"/>
    <property type="match status" value="1"/>
</dbReference>
<dbReference type="Pfam" id="PF15797">
    <property type="entry name" value="DUF4706"/>
    <property type="match status" value="1"/>
</dbReference>
<reference key="1">
    <citation type="submission" date="2005-07" db="EMBL/GenBank/DDBJ databases">
        <authorList>
            <consortium name="NIH - Zebrafish Gene Collection (ZGC) project"/>
        </authorList>
    </citation>
    <scope>NUCLEOTIDE SEQUENCE [LARGE SCALE MRNA]</scope>
    <source>
        <tissue>Embryo</tissue>
    </source>
</reference>
<proteinExistence type="evidence at transcript level"/>
<name>CA198_DANRE</name>